<gene>
    <name evidence="1" type="primary">pnp</name>
    <name type="ordered locus">DIP1467</name>
</gene>
<name>PNP_CORDI</name>
<evidence type="ECO:0000255" key="1">
    <source>
        <dbReference type="HAMAP-Rule" id="MF_01595"/>
    </source>
</evidence>
<accession>Q6NGP1</accession>
<protein>
    <recommendedName>
        <fullName evidence="1">Polyribonucleotide nucleotidyltransferase</fullName>
        <ecNumber evidence="1">2.7.7.8</ecNumber>
    </recommendedName>
    <alternativeName>
        <fullName evidence="1">Polynucleotide phosphorylase</fullName>
        <shortName evidence="1">PNPase</shortName>
    </alternativeName>
</protein>
<dbReference type="EC" id="2.7.7.8" evidence="1"/>
<dbReference type="EMBL" id="BX248358">
    <property type="protein sequence ID" value="CAE49995.1"/>
    <property type="molecule type" value="Genomic_DNA"/>
</dbReference>
<dbReference type="RefSeq" id="WP_010935086.1">
    <property type="nucleotide sequence ID" value="NC_002935.2"/>
</dbReference>
<dbReference type="SMR" id="Q6NGP1"/>
<dbReference type="STRING" id="257309.DIP1467"/>
<dbReference type="KEGG" id="cdi:DIP1467"/>
<dbReference type="HOGENOM" id="CLU_004217_2_2_11"/>
<dbReference type="Proteomes" id="UP000002198">
    <property type="component" value="Chromosome"/>
</dbReference>
<dbReference type="GO" id="GO:0005829">
    <property type="term" value="C:cytosol"/>
    <property type="evidence" value="ECO:0007669"/>
    <property type="project" value="TreeGrafter"/>
</dbReference>
<dbReference type="GO" id="GO:0000175">
    <property type="term" value="F:3'-5'-RNA exonuclease activity"/>
    <property type="evidence" value="ECO:0007669"/>
    <property type="project" value="TreeGrafter"/>
</dbReference>
<dbReference type="GO" id="GO:0000287">
    <property type="term" value="F:magnesium ion binding"/>
    <property type="evidence" value="ECO:0007669"/>
    <property type="project" value="UniProtKB-UniRule"/>
</dbReference>
<dbReference type="GO" id="GO:0004654">
    <property type="term" value="F:polyribonucleotide nucleotidyltransferase activity"/>
    <property type="evidence" value="ECO:0007669"/>
    <property type="project" value="UniProtKB-UniRule"/>
</dbReference>
<dbReference type="GO" id="GO:0003723">
    <property type="term" value="F:RNA binding"/>
    <property type="evidence" value="ECO:0007669"/>
    <property type="project" value="UniProtKB-UniRule"/>
</dbReference>
<dbReference type="GO" id="GO:0006402">
    <property type="term" value="P:mRNA catabolic process"/>
    <property type="evidence" value="ECO:0007669"/>
    <property type="project" value="UniProtKB-UniRule"/>
</dbReference>
<dbReference type="GO" id="GO:0006396">
    <property type="term" value="P:RNA processing"/>
    <property type="evidence" value="ECO:0007669"/>
    <property type="project" value="InterPro"/>
</dbReference>
<dbReference type="CDD" id="cd02393">
    <property type="entry name" value="KH-I_PNPase"/>
    <property type="match status" value="1"/>
</dbReference>
<dbReference type="CDD" id="cd11364">
    <property type="entry name" value="RNase_PH_PNPase_2"/>
    <property type="match status" value="1"/>
</dbReference>
<dbReference type="CDD" id="cd04472">
    <property type="entry name" value="S1_PNPase"/>
    <property type="match status" value="1"/>
</dbReference>
<dbReference type="FunFam" id="2.40.50.140:FF:000069">
    <property type="entry name" value="Polyribonucleotide nucleotidyltransferase"/>
    <property type="match status" value="1"/>
</dbReference>
<dbReference type="FunFam" id="3.30.1370.10:FF:000001">
    <property type="entry name" value="Polyribonucleotide nucleotidyltransferase"/>
    <property type="match status" value="1"/>
</dbReference>
<dbReference type="FunFam" id="3.30.230.70:FF:000001">
    <property type="entry name" value="Polyribonucleotide nucleotidyltransferase"/>
    <property type="match status" value="1"/>
</dbReference>
<dbReference type="FunFam" id="3.30.230.70:FF:000002">
    <property type="entry name" value="Polyribonucleotide nucleotidyltransferase"/>
    <property type="match status" value="1"/>
</dbReference>
<dbReference type="Gene3D" id="3.30.230.70">
    <property type="entry name" value="GHMP Kinase, N-terminal domain"/>
    <property type="match status" value="2"/>
</dbReference>
<dbReference type="Gene3D" id="3.30.1370.10">
    <property type="entry name" value="K Homology domain, type 1"/>
    <property type="match status" value="1"/>
</dbReference>
<dbReference type="Gene3D" id="2.40.50.140">
    <property type="entry name" value="Nucleic acid-binding proteins"/>
    <property type="match status" value="1"/>
</dbReference>
<dbReference type="HAMAP" id="MF_01595">
    <property type="entry name" value="PNPase"/>
    <property type="match status" value="1"/>
</dbReference>
<dbReference type="InterPro" id="IPR001247">
    <property type="entry name" value="ExoRNase_PH_dom1"/>
</dbReference>
<dbReference type="InterPro" id="IPR036345">
    <property type="entry name" value="ExoRNase_PH_dom2_sf"/>
</dbReference>
<dbReference type="InterPro" id="IPR014069">
    <property type="entry name" value="GPSI/PNP"/>
</dbReference>
<dbReference type="InterPro" id="IPR004087">
    <property type="entry name" value="KH_dom"/>
</dbReference>
<dbReference type="InterPro" id="IPR004088">
    <property type="entry name" value="KH_dom_type_1"/>
</dbReference>
<dbReference type="InterPro" id="IPR036612">
    <property type="entry name" value="KH_dom_type_1_sf"/>
</dbReference>
<dbReference type="InterPro" id="IPR012340">
    <property type="entry name" value="NA-bd_OB-fold"/>
</dbReference>
<dbReference type="InterPro" id="IPR012162">
    <property type="entry name" value="PNPase"/>
</dbReference>
<dbReference type="InterPro" id="IPR027408">
    <property type="entry name" value="PNPase/RNase_PH_dom_sf"/>
</dbReference>
<dbReference type="InterPro" id="IPR015848">
    <property type="entry name" value="PNPase_PH_RNA-bd_bac/org-type"/>
</dbReference>
<dbReference type="InterPro" id="IPR020568">
    <property type="entry name" value="Ribosomal_Su5_D2-typ_SF"/>
</dbReference>
<dbReference type="InterPro" id="IPR003029">
    <property type="entry name" value="S1_domain"/>
</dbReference>
<dbReference type="NCBIfam" id="TIGR03591">
    <property type="entry name" value="polynuc_phos"/>
    <property type="match status" value="1"/>
</dbReference>
<dbReference type="NCBIfam" id="TIGR02696">
    <property type="entry name" value="pppGpp_PNP"/>
    <property type="match status" value="1"/>
</dbReference>
<dbReference type="NCBIfam" id="NF008805">
    <property type="entry name" value="PRK11824.1"/>
    <property type="match status" value="1"/>
</dbReference>
<dbReference type="PANTHER" id="PTHR11252">
    <property type="entry name" value="POLYRIBONUCLEOTIDE NUCLEOTIDYLTRANSFERASE"/>
    <property type="match status" value="1"/>
</dbReference>
<dbReference type="PANTHER" id="PTHR11252:SF0">
    <property type="entry name" value="POLYRIBONUCLEOTIDE NUCLEOTIDYLTRANSFERASE 1, MITOCHONDRIAL"/>
    <property type="match status" value="1"/>
</dbReference>
<dbReference type="Pfam" id="PF00013">
    <property type="entry name" value="KH_1"/>
    <property type="match status" value="1"/>
</dbReference>
<dbReference type="Pfam" id="PF03726">
    <property type="entry name" value="PNPase"/>
    <property type="match status" value="1"/>
</dbReference>
<dbReference type="Pfam" id="PF01138">
    <property type="entry name" value="RNase_PH"/>
    <property type="match status" value="2"/>
</dbReference>
<dbReference type="Pfam" id="PF00575">
    <property type="entry name" value="S1"/>
    <property type="match status" value="1"/>
</dbReference>
<dbReference type="PIRSF" id="PIRSF005499">
    <property type="entry name" value="PNPase"/>
    <property type="match status" value="1"/>
</dbReference>
<dbReference type="SMART" id="SM00322">
    <property type="entry name" value="KH"/>
    <property type="match status" value="1"/>
</dbReference>
<dbReference type="SMART" id="SM00316">
    <property type="entry name" value="S1"/>
    <property type="match status" value="1"/>
</dbReference>
<dbReference type="SUPFAM" id="SSF54791">
    <property type="entry name" value="Eukaryotic type KH-domain (KH-domain type I)"/>
    <property type="match status" value="1"/>
</dbReference>
<dbReference type="SUPFAM" id="SSF50249">
    <property type="entry name" value="Nucleic acid-binding proteins"/>
    <property type="match status" value="1"/>
</dbReference>
<dbReference type="SUPFAM" id="SSF55666">
    <property type="entry name" value="Ribonuclease PH domain 2-like"/>
    <property type="match status" value="2"/>
</dbReference>
<dbReference type="SUPFAM" id="SSF54211">
    <property type="entry name" value="Ribosomal protein S5 domain 2-like"/>
    <property type="match status" value="2"/>
</dbReference>
<dbReference type="PROSITE" id="PS50084">
    <property type="entry name" value="KH_TYPE_1"/>
    <property type="match status" value="1"/>
</dbReference>
<dbReference type="PROSITE" id="PS50126">
    <property type="entry name" value="S1"/>
    <property type="match status" value="1"/>
</dbReference>
<sequence>MSTKPSNVVFNIDEEFGITEAIATIDNGDFGKRTIRFETGQLARQADGSVTTYLDDDTMLLATTTASNQPREGFDFFPLTVDVEERMYAAGRIPGSFFRREGRPSTEAILACRLIDRPLRPTFVKGLRNEVQVVITVLSVNPQDMYDVVAINGASAATQLSGLPVSGPVGGVRMALIADDAHPKGQWIAFPTHEQHEQALFELVVAGRIVSKKQGKKTVDDVAIMMVEAGATEQVVDRVKAGAPAPTESVVAEGLEAAKPFIEVLCRAQAGLAERAAKETQEFPLFPPYTDVVYDAVEKKVSKKLRSLLTIKSKQDRDEATNAYMEEIEADLIAQLGSDDEAAASKAIRAAYNAVMKKIVRHMILTEHFRIDGRGVTDIRDLGVEVDLIPRAHGSSLFERGETQILGVTTLDMLKMEQQIDSLTPATSKRYIHHYNFPPYSTGETGRVGSPKRREIGHGALAERALVPVIPSREEFPYAIRQVSEALGSNGSTSMGSVCASTLSLYNAGVPLKAPVAGIAMGLVSDEVDGETRYVALTDILGAEDAFGDMDFKVAGTRQFITALQLDTKLDGIPSEVLAQALSQANDARNTILDTMAEVIETPDEMSDYAPRITAITVPVNKIGEVIGPKGKTINSITEETGANISIEEDGTVYVSAASGAAAEAAIEKINAIANPQLPKVGERFLGTVVKTTAFGAFVSLLPGRDGLVHISKLGGGKRIEKVEDVVNVGDKLEVEILDIDNRGKISLAPVKNED</sequence>
<proteinExistence type="inferred from homology"/>
<comment type="function">
    <text evidence="1">Involved in mRNA degradation. Catalyzes the phosphorolysis of single-stranded polyribonucleotides processively in the 3'- to 5'-direction.</text>
</comment>
<comment type="catalytic activity">
    <reaction evidence="1">
        <text>RNA(n+1) + phosphate = RNA(n) + a ribonucleoside 5'-diphosphate</text>
        <dbReference type="Rhea" id="RHEA:22096"/>
        <dbReference type="Rhea" id="RHEA-COMP:14527"/>
        <dbReference type="Rhea" id="RHEA-COMP:17342"/>
        <dbReference type="ChEBI" id="CHEBI:43474"/>
        <dbReference type="ChEBI" id="CHEBI:57930"/>
        <dbReference type="ChEBI" id="CHEBI:140395"/>
        <dbReference type="EC" id="2.7.7.8"/>
    </reaction>
</comment>
<comment type="cofactor">
    <cofactor evidence="1">
        <name>Mg(2+)</name>
        <dbReference type="ChEBI" id="CHEBI:18420"/>
    </cofactor>
</comment>
<comment type="subcellular location">
    <subcellularLocation>
        <location evidence="1">Cytoplasm</location>
    </subcellularLocation>
</comment>
<comment type="similarity">
    <text evidence="1">Belongs to the polyribonucleotide nucleotidyltransferase family.</text>
</comment>
<feature type="chain" id="PRO_0000329607" description="Polyribonucleotide nucleotidyltransferase">
    <location>
        <begin position="1"/>
        <end position="755"/>
    </location>
</feature>
<feature type="domain" description="KH" evidence="1">
    <location>
        <begin position="611"/>
        <end position="670"/>
    </location>
</feature>
<feature type="domain" description="S1 motif" evidence="1">
    <location>
        <begin position="682"/>
        <end position="751"/>
    </location>
</feature>
<feature type="binding site" evidence="1">
    <location>
        <position position="545"/>
    </location>
    <ligand>
        <name>Mg(2+)</name>
        <dbReference type="ChEBI" id="CHEBI:18420"/>
    </ligand>
</feature>
<feature type="binding site" evidence="1">
    <location>
        <position position="551"/>
    </location>
    <ligand>
        <name>Mg(2+)</name>
        <dbReference type="ChEBI" id="CHEBI:18420"/>
    </ligand>
</feature>
<keyword id="KW-0963">Cytoplasm</keyword>
<keyword id="KW-0460">Magnesium</keyword>
<keyword id="KW-0479">Metal-binding</keyword>
<keyword id="KW-0548">Nucleotidyltransferase</keyword>
<keyword id="KW-1185">Reference proteome</keyword>
<keyword id="KW-0694">RNA-binding</keyword>
<keyword id="KW-0808">Transferase</keyword>
<reference key="1">
    <citation type="journal article" date="2003" name="Nucleic Acids Res.">
        <title>The complete genome sequence and analysis of Corynebacterium diphtheriae NCTC13129.</title>
        <authorList>
            <person name="Cerdeno-Tarraga A.-M."/>
            <person name="Efstratiou A."/>
            <person name="Dover L.G."/>
            <person name="Holden M.T.G."/>
            <person name="Pallen M.J."/>
            <person name="Bentley S.D."/>
            <person name="Besra G.S."/>
            <person name="Churcher C.M."/>
            <person name="James K.D."/>
            <person name="De Zoysa A."/>
            <person name="Chillingworth T."/>
            <person name="Cronin A."/>
            <person name="Dowd L."/>
            <person name="Feltwell T."/>
            <person name="Hamlin N."/>
            <person name="Holroyd S."/>
            <person name="Jagels K."/>
            <person name="Moule S."/>
            <person name="Quail M.A."/>
            <person name="Rabbinowitsch E."/>
            <person name="Rutherford K.M."/>
            <person name="Thomson N.R."/>
            <person name="Unwin L."/>
            <person name="Whitehead S."/>
            <person name="Barrell B.G."/>
            <person name="Parkhill J."/>
        </authorList>
    </citation>
    <scope>NUCLEOTIDE SEQUENCE [LARGE SCALE GENOMIC DNA]</scope>
    <source>
        <strain>ATCC 700971 / NCTC 13129 / Biotype gravis</strain>
    </source>
</reference>
<organism>
    <name type="scientific">Corynebacterium diphtheriae (strain ATCC 700971 / NCTC 13129 / Biotype gravis)</name>
    <dbReference type="NCBI Taxonomy" id="257309"/>
    <lineage>
        <taxon>Bacteria</taxon>
        <taxon>Bacillati</taxon>
        <taxon>Actinomycetota</taxon>
        <taxon>Actinomycetes</taxon>
        <taxon>Mycobacteriales</taxon>
        <taxon>Corynebacteriaceae</taxon>
        <taxon>Corynebacterium</taxon>
    </lineage>
</organism>